<name>ASB8_HUMAN</name>
<keyword id="KW-0040">ANK repeat</keyword>
<keyword id="KW-0963">Cytoplasm</keyword>
<keyword id="KW-0597">Phosphoprotein</keyword>
<keyword id="KW-1267">Proteomics identification</keyword>
<keyword id="KW-1185">Reference proteome</keyword>
<keyword id="KW-0677">Repeat</keyword>
<keyword id="KW-0833">Ubl conjugation pathway</keyword>
<accession>Q9H765</accession>
<accession>A8K1P2</accession>
<accession>Q547Q2</accession>
<sequence length="288" mass="31642">MSSSMWYIMQSIQSKYSLSERLIRTIAAIRSFPHDNVEDLIRGGADVNCTHGTLKPLHCACMVSDADCVELLLEKGAEVNALDGYNRTALHYAAEKDEACVEVLLEYGANPNALDGNRDTPLHWAAFKNNAECVRALLESGASVNALDYNNDTPLSWAAMKGNLESVSILLDYGAEVRVINLIGQTPISRLVALLVRGLGTEKEDSCFELLHRAVGHFELRKNGTMPREVARDPQLCEKLTVLCSAPGTLKTLARYAVRRSLGLQYLPDAVKGLPLPASLKEYLLLLE</sequence>
<dbReference type="EMBL" id="AF464877">
    <property type="protein sequence ID" value="AAQ04830.1"/>
    <property type="molecule type" value="mRNA"/>
</dbReference>
<dbReference type="EMBL" id="AK024908">
    <property type="protein sequence ID" value="BAB15033.1"/>
    <property type="molecule type" value="mRNA"/>
</dbReference>
<dbReference type="EMBL" id="AK289957">
    <property type="protein sequence ID" value="BAF82646.1"/>
    <property type="molecule type" value="mRNA"/>
</dbReference>
<dbReference type="EMBL" id="BC001321">
    <property type="protein sequence ID" value="AAH01321.1"/>
    <property type="molecule type" value="mRNA"/>
</dbReference>
<dbReference type="CCDS" id="CCDS8761.1"/>
<dbReference type="RefSeq" id="NP_001306225.1">
    <property type="nucleotide sequence ID" value="NM_001319296.2"/>
</dbReference>
<dbReference type="RefSeq" id="NP_001306226.1">
    <property type="nucleotide sequence ID" value="NM_001319297.2"/>
</dbReference>
<dbReference type="RefSeq" id="NP_001306227.1">
    <property type="nucleotide sequence ID" value="NM_001319298.1"/>
</dbReference>
<dbReference type="RefSeq" id="NP_001306228.1">
    <property type="nucleotide sequence ID" value="NM_001319299.1"/>
</dbReference>
<dbReference type="RefSeq" id="NP_001306229.1">
    <property type="nucleotide sequence ID" value="NM_001319300.1"/>
</dbReference>
<dbReference type="RefSeq" id="NP_001306230.1">
    <property type="nucleotide sequence ID" value="NM_001319301.1"/>
</dbReference>
<dbReference type="RefSeq" id="NP_077000.1">
    <property type="nucleotide sequence ID" value="NM_024095.5"/>
</dbReference>
<dbReference type="SMR" id="Q9H765"/>
<dbReference type="BioGRID" id="126614">
    <property type="interactions" value="35"/>
</dbReference>
<dbReference type="FunCoup" id="Q9H765">
    <property type="interactions" value="677"/>
</dbReference>
<dbReference type="IntAct" id="Q9H765">
    <property type="interactions" value="22"/>
</dbReference>
<dbReference type="MINT" id="Q9H765"/>
<dbReference type="STRING" id="9606.ENSP00000445622"/>
<dbReference type="GlyGen" id="Q9H765">
    <property type="glycosylation" value="1 site, 1 O-linked glycan (1 site)"/>
</dbReference>
<dbReference type="iPTMnet" id="Q9H765"/>
<dbReference type="PhosphoSitePlus" id="Q9H765"/>
<dbReference type="BioMuta" id="ASB8"/>
<dbReference type="DMDM" id="29839757"/>
<dbReference type="jPOST" id="Q9H765"/>
<dbReference type="MassIVE" id="Q9H765"/>
<dbReference type="PaxDb" id="9606-ENSP00000320893"/>
<dbReference type="PeptideAtlas" id="Q9H765"/>
<dbReference type="ProteomicsDB" id="81083"/>
<dbReference type="Pumba" id="Q9H765"/>
<dbReference type="Antibodypedia" id="1146">
    <property type="antibodies" value="203 antibodies from 25 providers"/>
</dbReference>
<dbReference type="DNASU" id="140461"/>
<dbReference type="Ensembl" id="ENST00000317697.8">
    <property type="protein sequence ID" value="ENSP00000320893.3"/>
    <property type="gene ID" value="ENSG00000177981.11"/>
</dbReference>
<dbReference type="Ensembl" id="ENST00000536549.5">
    <property type="protein sequence ID" value="ENSP00000445622.1"/>
    <property type="gene ID" value="ENSG00000177981.11"/>
</dbReference>
<dbReference type="GeneID" id="140461"/>
<dbReference type="KEGG" id="hsa:140461"/>
<dbReference type="MANE-Select" id="ENST00000317697.8">
    <property type="protein sequence ID" value="ENSP00000320893.3"/>
    <property type="RefSeq nucleotide sequence ID" value="NM_024095.5"/>
    <property type="RefSeq protein sequence ID" value="NP_077000.1"/>
</dbReference>
<dbReference type="UCSC" id="uc001rrh.4">
    <property type="organism name" value="human"/>
</dbReference>
<dbReference type="AGR" id="HGNC:17183"/>
<dbReference type="CTD" id="140461"/>
<dbReference type="DisGeNET" id="140461"/>
<dbReference type="GeneCards" id="ASB8"/>
<dbReference type="HGNC" id="HGNC:17183">
    <property type="gene designation" value="ASB8"/>
</dbReference>
<dbReference type="HPA" id="ENSG00000177981">
    <property type="expression patterns" value="Tissue enhanced (skeletal muscle, tongue)"/>
</dbReference>
<dbReference type="MIM" id="615053">
    <property type="type" value="gene"/>
</dbReference>
<dbReference type="neXtProt" id="NX_Q9H765"/>
<dbReference type="OpenTargets" id="ENSG00000177981"/>
<dbReference type="PharmGKB" id="PA25036"/>
<dbReference type="VEuPathDB" id="HostDB:ENSG00000177981"/>
<dbReference type="eggNOG" id="KOG0504">
    <property type="taxonomic scope" value="Eukaryota"/>
</dbReference>
<dbReference type="GeneTree" id="ENSGT00940000159366"/>
<dbReference type="HOGENOM" id="CLU_000134_52_0_1"/>
<dbReference type="InParanoid" id="Q9H765"/>
<dbReference type="OMA" id="NCMHGIL"/>
<dbReference type="OrthoDB" id="10258888at2759"/>
<dbReference type="PAN-GO" id="Q9H765">
    <property type="GO annotations" value="0 GO annotations based on evolutionary models"/>
</dbReference>
<dbReference type="PhylomeDB" id="Q9H765"/>
<dbReference type="TreeFam" id="TF332452"/>
<dbReference type="PathwayCommons" id="Q9H765"/>
<dbReference type="Reactome" id="R-HSA-8951664">
    <property type="pathway name" value="Neddylation"/>
</dbReference>
<dbReference type="Reactome" id="R-HSA-983168">
    <property type="pathway name" value="Antigen processing: Ubiquitination &amp; Proteasome degradation"/>
</dbReference>
<dbReference type="SignaLink" id="Q9H765"/>
<dbReference type="SIGNOR" id="Q9H765"/>
<dbReference type="UniPathway" id="UPA00143"/>
<dbReference type="BioGRID-ORCS" id="140461">
    <property type="hits" value="8 hits in 1194 CRISPR screens"/>
</dbReference>
<dbReference type="ChiTaRS" id="ASB8">
    <property type="organism name" value="human"/>
</dbReference>
<dbReference type="GenomeRNAi" id="140461"/>
<dbReference type="Pharos" id="Q9H765">
    <property type="development level" value="Tdark"/>
</dbReference>
<dbReference type="PRO" id="PR:Q9H765"/>
<dbReference type="Proteomes" id="UP000005640">
    <property type="component" value="Chromosome 12"/>
</dbReference>
<dbReference type="RNAct" id="Q9H765">
    <property type="molecule type" value="protein"/>
</dbReference>
<dbReference type="Bgee" id="ENSG00000177981">
    <property type="expression patterns" value="Expressed in gastrocnemius and 206 other cell types or tissues"/>
</dbReference>
<dbReference type="ExpressionAtlas" id="Q9H765">
    <property type="expression patterns" value="baseline and differential"/>
</dbReference>
<dbReference type="GO" id="GO:0005829">
    <property type="term" value="C:cytosol"/>
    <property type="evidence" value="ECO:0000304"/>
    <property type="project" value="Reactome"/>
</dbReference>
<dbReference type="GO" id="GO:0035556">
    <property type="term" value="P:intracellular signal transduction"/>
    <property type="evidence" value="ECO:0007669"/>
    <property type="project" value="InterPro"/>
</dbReference>
<dbReference type="GO" id="GO:0016567">
    <property type="term" value="P:protein ubiquitination"/>
    <property type="evidence" value="ECO:0007669"/>
    <property type="project" value="UniProtKB-UniPathway"/>
</dbReference>
<dbReference type="CDD" id="cd03727">
    <property type="entry name" value="SOCS_ASB8"/>
    <property type="match status" value="1"/>
</dbReference>
<dbReference type="FunFam" id="1.10.750.20:FF:000001">
    <property type="entry name" value="Ankyrin repeat and SOCS box containing 1"/>
    <property type="match status" value="1"/>
</dbReference>
<dbReference type="FunFam" id="1.25.40.20:FF:000274">
    <property type="entry name" value="Ankyrin repeat and SOCS box containing 8"/>
    <property type="match status" value="1"/>
</dbReference>
<dbReference type="FunFam" id="1.25.40.20:FF:000303">
    <property type="entry name" value="Ankyrin repeat and SOCS box containing 8"/>
    <property type="match status" value="1"/>
</dbReference>
<dbReference type="Gene3D" id="1.25.40.20">
    <property type="entry name" value="Ankyrin repeat-containing domain"/>
    <property type="match status" value="2"/>
</dbReference>
<dbReference type="Gene3D" id="1.10.750.20">
    <property type="entry name" value="SOCS box"/>
    <property type="match status" value="1"/>
</dbReference>
<dbReference type="InterPro" id="IPR002110">
    <property type="entry name" value="Ankyrin_rpt"/>
</dbReference>
<dbReference type="InterPro" id="IPR036770">
    <property type="entry name" value="Ankyrin_rpt-contain_sf"/>
</dbReference>
<dbReference type="InterPro" id="IPR037332">
    <property type="entry name" value="ASB8_SOCS"/>
</dbReference>
<dbReference type="InterPro" id="IPR001496">
    <property type="entry name" value="SOCS_box"/>
</dbReference>
<dbReference type="InterPro" id="IPR036036">
    <property type="entry name" value="SOCS_box-like_dom_sf"/>
</dbReference>
<dbReference type="PANTHER" id="PTHR24134:SF9">
    <property type="entry name" value="ANKYRIN REPEAT AND SOCS BOX PROTEIN 8"/>
    <property type="match status" value="1"/>
</dbReference>
<dbReference type="PANTHER" id="PTHR24134">
    <property type="entry name" value="ANKYRIN REPEAT-CONTAINING PROTEIN DDB_G0279043"/>
    <property type="match status" value="1"/>
</dbReference>
<dbReference type="Pfam" id="PF12796">
    <property type="entry name" value="Ank_2"/>
    <property type="match status" value="1"/>
</dbReference>
<dbReference type="Pfam" id="PF13637">
    <property type="entry name" value="Ank_4"/>
    <property type="match status" value="1"/>
</dbReference>
<dbReference type="Pfam" id="PF07525">
    <property type="entry name" value="SOCS_box"/>
    <property type="match status" value="1"/>
</dbReference>
<dbReference type="SMART" id="SM00248">
    <property type="entry name" value="ANK"/>
    <property type="match status" value="4"/>
</dbReference>
<dbReference type="SMART" id="SM00969">
    <property type="entry name" value="SOCS_box"/>
    <property type="match status" value="1"/>
</dbReference>
<dbReference type="SUPFAM" id="SSF48403">
    <property type="entry name" value="Ankyrin repeat"/>
    <property type="match status" value="1"/>
</dbReference>
<dbReference type="SUPFAM" id="SSF158235">
    <property type="entry name" value="SOCS box-like"/>
    <property type="match status" value="1"/>
</dbReference>
<dbReference type="PROSITE" id="PS50297">
    <property type="entry name" value="ANK_REP_REGION"/>
    <property type="match status" value="1"/>
</dbReference>
<dbReference type="PROSITE" id="PS50088">
    <property type="entry name" value="ANK_REPEAT"/>
    <property type="match status" value="4"/>
</dbReference>
<dbReference type="PROSITE" id="PS50225">
    <property type="entry name" value="SOCS"/>
    <property type="match status" value="1"/>
</dbReference>
<gene>
    <name type="primary">ASB8</name>
    <name type="ORF">PP14212</name>
</gene>
<reference key="1">
    <citation type="journal article" date="2003" name="Biochem. Biophys. Res. Commun.">
        <title>Molecular cloning and characterization of the human ASB-8 gene encoding a novel member of ankyrin repeat and SOCS box containing protein family.</title>
        <authorList>
            <person name="Liu Y."/>
            <person name="Li J."/>
            <person name="Zhang F."/>
            <person name="Qin W."/>
            <person name="Yao G."/>
            <person name="He X."/>
            <person name="Xue P."/>
            <person name="Ge C."/>
            <person name="Wan D."/>
            <person name="Gu J."/>
        </authorList>
    </citation>
    <scope>NUCLEOTIDE SEQUENCE [LARGE SCALE MRNA]</scope>
    <scope>SUBCELLULAR LOCATION</scope>
    <scope>TISSUE SPECIFICITY</scope>
</reference>
<reference key="2">
    <citation type="journal article" date="2004" name="Nat. Genet.">
        <title>Complete sequencing and characterization of 21,243 full-length human cDNAs.</title>
        <authorList>
            <person name="Ota T."/>
            <person name="Suzuki Y."/>
            <person name="Nishikawa T."/>
            <person name="Otsuki T."/>
            <person name="Sugiyama T."/>
            <person name="Irie R."/>
            <person name="Wakamatsu A."/>
            <person name="Hayashi K."/>
            <person name="Sato H."/>
            <person name="Nagai K."/>
            <person name="Kimura K."/>
            <person name="Makita H."/>
            <person name="Sekine M."/>
            <person name="Obayashi M."/>
            <person name="Nishi T."/>
            <person name="Shibahara T."/>
            <person name="Tanaka T."/>
            <person name="Ishii S."/>
            <person name="Yamamoto J."/>
            <person name="Saito K."/>
            <person name="Kawai Y."/>
            <person name="Isono Y."/>
            <person name="Nakamura Y."/>
            <person name="Nagahari K."/>
            <person name="Murakami K."/>
            <person name="Yasuda T."/>
            <person name="Iwayanagi T."/>
            <person name="Wagatsuma M."/>
            <person name="Shiratori A."/>
            <person name="Sudo H."/>
            <person name="Hosoiri T."/>
            <person name="Kaku Y."/>
            <person name="Kodaira H."/>
            <person name="Kondo H."/>
            <person name="Sugawara M."/>
            <person name="Takahashi M."/>
            <person name="Kanda K."/>
            <person name="Yokoi T."/>
            <person name="Furuya T."/>
            <person name="Kikkawa E."/>
            <person name="Omura Y."/>
            <person name="Abe K."/>
            <person name="Kamihara K."/>
            <person name="Katsuta N."/>
            <person name="Sato K."/>
            <person name="Tanikawa M."/>
            <person name="Yamazaki M."/>
            <person name="Ninomiya K."/>
            <person name="Ishibashi T."/>
            <person name="Yamashita H."/>
            <person name="Murakawa K."/>
            <person name="Fujimori K."/>
            <person name="Tanai H."/>
            <person name="Kimata M."/>
            <person name="Watanabe M."/>
            <person name="Hiraoka S."/>
            <person name="Chiba Y."/>
            <person name="Ishida S."/>
            <person name="Ono Y."/>
            <person name="Takiguchi S."/>
            <person name="Watanabe S."/>
            <person name="Yosida M."/>
            <person name="Hotuta T."/>
            <person name="Kusano J."/>
            <person name="Kanehori K."/>
            <person name="Takahashi-Fujii A."/>
            <person name="Hara H."/>
            <person name="Tanase T.-O."/>
            <person name="Nomura Y."/>
            <person name="Togiya S."/>
            <person name="Komai F."/>
            <person name="Hara R."/>
            <person name="Takeuchi K."/>
            <person name="Arita M."/>
            <person name="Imose N."/>
            <person name="Musashino K."/>
            <person name="Yuuki H."/>
            <person name="Oshima A."/>
            <person name="Sasaki N."/>
            <person name="Aotsuka S."/>
            <person name="Yoshikawa Y."/>
            <person name="Matsunawa H."/>
            <person name="Ichihara T."/>
            <person name="Shiohata N."/>
            <person name="Sano S."/>
            <person name="Moriya S."/>
            <person name="Momiyama H."/>
            <person name="Satoh N."/>
            <person name="Takami S."/>
            <person name="Terashima Y."/>
            <person name="Suzuki O."/>
            <person name="Nakagawa S."/>
            <person name="Senoh A."/>
            <person name="Mizoguchi H."/>
            <person name="Goto Y."/>
            <person name="Shimizu F."/>
            <person name="Wakebe H."/>
            <person name="Hishigaki H."/>
            <person name="Watanabe T."/>
            <person name="Sugiyama A."/>
            <person name="Takemoto M."/>
            <person name="Kawakami B."/>
            <person name="Yamazaki M."/>
            <person name="Watanabe K."/>
            <person name="Kumagai A."/>
            <person name="Itakura S."/>
            <person name="Fukuzumi Y."/>
            <person name="Fujimori Y."/>
            <person name="Komiyama M."/>
            <person name="Tashiro H."/>
            <person name="Tanigami A."/>
            <person name="Fujiwara T."/>
            <person name="Ono T."/>
            <person name="Yamada K."/>
            <person name="Fujii Y."/>
            <person name="Ozaki K."/>
            <person name="Hirao M."/>
            <person name="Ohmori Y."/>
            <person name="Kawabata A."/>
            <person name="Hikiji T."/>
            <person name="Kobatake N."/>
            <person name="Inagaki H."/>
            <person name="Ikema Y."/>
            <person name="Okamoto S."/>
            <person name="Okitani R."/>
            <person name="Kawakami T."/>
            <person name="Noguchi S."/>
            <person name="Itoh T."/>
            <person name="Shigeta K."/>
            <person name="Senba T."/>
            <person name="Matsumura K."/>
            <person name="Nakajima Y."/>
            <person name="Mizuno T."/>
            <person name="Morinaga M."/>
            <person name="Sasaki M."/>
            <person name="Togashi T."/>
            <person name="Oyama M."/>
            <person name="Hata H."/>
            <person name="Watanabe M."/>
            <person name="Komatsu T."/>
            <person name="Mizushima-Sugano J."/>
            <person name="Satoh T."/>
            <person name="Shirai Y."/>
            <person name="Takahashi Y."/>
            <person name="Nakagawa K."/>
            <person name="Okumura K."/>
            <person name="Nagase T."/>
            <person name="Nomura N."/>
            <person name="Kikuchi H."/>
            <person name="Masuho Y."/>
            <person name="Yamashita R."/>
            <person name="Nakai K."/>
            <person name="Yada T."/>
            <person name="Nakamura Y."/>
            <person name="Ohara O."/>
            <person name="Isogai T."/>
            <person name="Sugano S."/>
        </authorList>
    </citation>
    <scope>NUCLEOTIDE SEQUENCE [LARGE SCALE MRNA]</scope>
    <source>
        <tissue>Colon</tissue>
        <tissue>Hippocampus</tissue>
    </source>
</reference>
<reference key="3">
    <citation type="journal article" date="2004" name="Genome Res.">
        <title>The status, quality, and expansion of the NIH full-length cDNA project: the Mammalian Gene Collection (MGC).</title>
        <authorList>
            <consortium name="The MGC Project Team"/>
        </authorList>
    </citation>
    <scope>NUCLEOTIDE SEQUENCE [LARGE SCALE MRNA]</scope>
    <source>
        <tissue>Cervix</tissue>
    </source>
</reference>
<reference key="4">
    <citation type="journal article" date="2020" name="Mol. Immunol.">
        <title>E3 ubiquitin ligase ASB8 negatively regulates interferon via regulating TBK1/IKKi homeostasis.</title>
        <authorList>
            <person name="Guo Y."/>
            <person name="Li R."/>
            <person name="Tan Z."/>
            <person name="Shi J."/>
            <person name="Fu Y."/>
            <person name="Song Y."/>
            <person name="Zhu M."/>
            <person name="Zhang L."/>
            <person name="Huang J."/>
        </authorList>
    </citation>
    <scope>FUNCTION</scope>
    <scope>INTERACTION WITH TBK1</scope>
    <scope>SUBCELLULAR LOCATION</scope>
    <scope>PHOSPHORYLATION AT SER-17</scope>
    <scope>MUTAGENESIS OF SER-17</scope>
</reference>
<evidence type="ECO:0000250" key="1"/>
<evidence type="ECO:0000255" key="2">
    <source>
        <dbReference type="PROSITE-ProRule" id="PRU00194"/>
    </source>
</evidence>
<evidence type="ECO:0000269" key="3">
    <source>
    </source>
</evidence>
<evidence type="ECO:0000269" key="4">
    <source>
    </source>
</evidence>
<evidence type="ECO:0000305" key="5"/>
<comment type="function">
    <text evidence="4">May be a substrate-recognition component of a SCF-like ECS (Elongin-Cullin-SOCS-box protein) E3 ubiquitin-protein ligase complex which mediates the ubiquitination and subsequent proteasomal degradation of target proteins. Inhibits IFN-beta production through the IRF3 signaling pathway by targeting TBK1 via 'Lys-48'-linked ubiquitination, leading to its proteasomal degradation (PubMed:32298923).</text>
</comment>
<comment type="pathway">
    <text>Protein modification; protein ubiquitination.</text>
</comment>
<comment type="subunit">
    <text evidence="4">Interacts with TBK1; this interaction promotes TBK1 proteasomal degradation.</text>
</comment>
<comment type="interaction">
    <interactant intactId="EBI-3942509">
        <id>Q9H765</id>
    </interactant>
    <interactant intactId="EBI-12157263">
        <id>P40337-2</id>
        <label>VHL</label>
    </interactant>
    <organismsDiffer>false</organismsDiffer>
    <experiments>3</experiments>
</comment>
<comment type="subcellular location">
    <subcellularLocation>
        <location evidence="3 4">Cytoplasm</location>
    </subcellularLocation>
</comment>
<comment type="tissue specificity">
    <text evidence="3">Highest level of expression in skeletal muscle. Also expressed in heart, brain, placenta, liver, kidney and pancreas.</text>
</comment>
<comment type="domain">
    <text evidence="1">The SOCS box domain mediates the interaction with the Elongin BC complex, an adapter module in different E3 ubiquitin-protein ligase complexes.</text>
</comment>
<comment type="PTM">
    <text evidence="4">Phosphorylated by TBK1.</text>
</comment>
<comment type="similarity">
    <text evidence="5">Belongs to the ankyrin SOCS box (ASB) family.</text>
</comment>
<proteinExistence type="evidence at protein level"/>
<organism>
    <name type="scientific">Homo sapiens</name>
    <name type="common">Human</name>
    <dbReference type="NCBI Taxonomy" id="9606"/>
    <lineage>
        <taxon>Eukaryota</taxon>
        <taxon>Metazoa</taxon>
        <taxon>Chordata</taxon>
        <taxon>Craniata</taxon>
        <taxon>Vertebrata</taxon>
        <taxon>Euteleostomi</taxon>
        <taxon>Mammalia</taxon>
        <taxon>Eutheria</taxon>
        <taxon>Euarchontoglires</taxon>
        <taxon>Primates</taxon>
        <taxon>Haplorrhini</taxon>
        <taxon>Catarrhini</taxon>
        <taxon>Hominidae</taxon>
        <taxon>Homo</taxon>
    </lineage>
</organism>
<feature type="chain" id="PRO_0000066938" description="Ankyrin repeat and SOCS box protein 8">
    <location>
        <begin position="1"/>
        <end position="288"/>
    </location>
</feature>
<feature type="repeat" description="ANK 1">
    <location>
        <begin position="52"/>
        <end position="81"/>
    </location>
</feature>
<feature type="repeat" description="ANK 2">
    <location>
        <begin position="85"/>
        <end position="113"/>
    </location>
</feature>
<feature type="repeat" description="ANK 3">
    <location>
        <begin position="117"/>
        <end position="146"/>
    </location>
</feature>
<feature type="repeat" description="ANK 4">
    <location>
        <begin position="150"/>
        <end position="179"/>
    </location>
</feature>
<feature type="domain" description="SOCS box" evidence="2">
    <location>
        <begin position="235"/>
        <end position="288"/>
    </location>
</feature>
<feature type="modified residue" description="Phosphoserine" evidence="4">
    <location>
        <position position="17"/>
    </location>
</feature>
<feature type="mutagenesis site" description="Almost complete lost of phosphorylation by TBK1." evidence="4">
    <original>S</original>
    <variation>A</variation>
    <location>
        <position position="17"/>
    </location>
</feature>
<protein>
    <recommendedName>
        <fullName>Ankyrin repeat and SOCS box protein 8</fullName>
        <shortName>ASB-8</shortName>
    </recommendedName>
</protein>